<proteinExistence type="inferred from homology"/>
<keyword id="KW-0997">Cell inner membrane</keyword>
<keyword id="KW-1003">Cell membrane</keyword>
<keyword id="KW-0472">Membrane</keyword>
<keyword id="KW-1185">Reference proteome</keyword>
<keyword id="KW-0812">Transmembrane</keyword>
<keyword id="KW-1133">Transmembrane helix</keyword>
<keyword id="KW-0813">Transport</keyword>
<reference key="1">
    <citation type="journal article" date="2002" name="Proc. Natl. Acad. Sci. U.S.A.">
        <title>Extensive mosaic structure revealed by the complete genome sequence of uropathogenic Escherichia coli.</title>
        <authorList>
            <person name="Welch R.A."/>
            <person name="Burland V."/>
            <person name="Plunkett G. III"/>
            <person name="Redford P."/>
            <person name="Roesch P."/>
            <person name="Rasko D."/>
            <person name="Buckles E.L."/>
            <person name="Liou S.-R."/>
            <person name="Boutin A."/>
            <person name="Hackett J."/>
            <person name="Stroud D."/>
            <person name="Mayhew G.F."/>
            <person name="Rose D.J."/>
            <person name="Zhou S."/>
            <person name="Schwartz D.C."/>
            <person name="Perna N.T."/>
            <person name="Mobley H.L.T."/>
            <person name="Donnenberg M.S."/>
            <person name="Blattner F.R."/>
        </authorList>
    </citation>
    <scope>NUCLEOTIDE SEQUENCE [LARGE SCALE GENOMIC DNA]</scope>
    <source>
        <strain>CFT073 / ATCC 700928 / UPEC</strain>
    </source>
</reference>
<evidence type="ECO:0000250" key="1"/>
<evidence type="ECO:0000305" key="2"/>
<dbReference type="EMBL" id="AE014075">
    <property type="protein sequence ID" value="AAN80567.1"/>
    <property type="molecule type" value="Genomic_DNA"/>
</dbReference>
<dbReference type="RefSeq" id="WP_000956506.1">
    <property type="nucleotide sequence ID" value="NZ_CP051263.1"/>
</dbReference>
<dbReference type="SMR" id="Q8FH26"/>
<dbReference type="STRING" id="199310.c2107"/>
<dbReference type="KEGG" id="ecc:c2107"/>
<dbReference type="eggNOG" id="COG4139">
    <property type="taxonomic scope" value="Bacteria"/>
</dbReference>
<dbReference type="HOGENOM" id="CLU_013016_0_3_6"/>
<dbReference type="BioCyc" id="ECOL199310:C2107-MONOMER"/>
<dbReference type="Proteomes" id="UP000001410">
    <property type="component" value="Chromosome"/>
</dbReference>
<dbReference type="GO" id="GO:0005886">
    <property type="term" value="C:plasma membrane"/>
    <property type="evidence" value="ECO:0007669"/>
    <property type="project" value="UniProtKB-SubCell"/>
</dbReference>
<dbReference type="GO" id="GO:0090482">
    <property type="term" value="F:vitamin transmembrane transporter activity"/>
    <property type="evidence" value="ECO:0007669"/>
    <property type="project" value="UniProtKB-UniRule"/>
</dbReference>
<dbReference type="GO" id="GO:0015889">
    <property type="term" value="P:cobalamin transport"/>
    <property type="evidence" value="ECO:0007669"/>
    <property type="project" value="UniProtKB-UniRule"/>
</dbReference>
<dbReference type="CDD" id="cd06550">
    <property type="entry name" value="TM_ABC_iron-siderophores_like"/>
    <property type="match status" value="1"/>
</dbReference>
<dbReference type="FunFam" id="1.10.3470.10:FF:000001">
    <property type="entry name" value="Vitamin B12 ABC transporter permease BtuC"/>
    <property type="match status" value="1"/>
</dbReference>
<dbReference type="Gene3D" id="1.10.3470.10">
    <property type="entry name" value="ABC transporter involved in vitamin B12 uptake, BtuC"/>
    <property type="match status" value="1"/>
</dbReference>
<dbReference type="HAMAP" id="MF_01004">
    <property type="entry name" value="BtuC"/>
    <property type="match status" value="1"/>
</dbReference>
<dbReference type="InterPro" id="IPR037294">
    <property type="entry name" value="ABC_BtuC-like"/>
</dbReference>
<dbReference type="InterPro" id="IPR023691">
    <property type="entry name" value="ABC_transptr_BtuC"/>
</dbReference>
<dbReference type="InterPro" id="IPR000522">
    <property type="entry name" value="ABC_transptr_permease_BtuC"/>
</dbReference>
<dbReference type="NCBIfam" id="NF003001">
    <property type="entry name" value="PRK03784.1"/>
    <property type="match status" value="1"/>
</dbReference>
<dbReference type="PANTHER" id="PTHR30472">
    <property type="entry name" value="FERRIC ENTEROBACTIN TRANSPORT SYSTEM PERMEASE PROTEIN"/>
    <property type="match status" value="1"/>
</dbReference>
<dbReference type="PANTHER" id="PTHR30472:SF29">
    <property type="entry name" value="VITAMIN B12 IMPORT SYSTEM PERMEASE PROTEIN BTUC"/>
    <property type="match status" value="1"/>
</dbReference>
<dbReference type="Pfam" id="PF01032">
    <property type="entry name" value="FecCD"/>
    <property type="match status" value="1"/>
</dbReference>
<dbReference type="SUPFAM" id="SSF81345">
    <property type="entry name" value="ABC transporter involved in vitamin B12 uptake, BtuC"/>
    <property type="match status" value="1"/>
</dbReference>
<accession>Q8FH26</accession>
<sequence>MLTLARQQQRQNIRWLLCLSVLMLLALLLSLCAGEQWILPGDWFSPRGELFVWQIRLPRTLAVLLVGAALAISGAVMQALFENPLAEPGLLGVSNGAGVGLIAAVLLGQGQLPNWALGLCAIAGALIITLILLRFARRHLSTSRLLLAGVALGIICSALMTWAIYFSTSVDLRQLMYWMMGGFGGVDWRQSWLMVALIPVLLWICCQSRPMNMLALGEISARQLGLPLWFWRNVLVAATGWMVGVSVALAGAIGFIGLVIPHILRLCGLTDHRVLLPGCALAGASALLLADIVARLALAAAELPIGVVTATLGAPVFIWLLLKAGR</sequence>
<feature type="chain" id="PRO_0000059969" description="Vitamin B12 import system permease protein BtuC">
    <location>
        <begin position="1"/>
        <end position="326"/>
    </location>
</feature>
<feature type="topological domain" description="Cytoplasmic" evidence="1">
    <location>
        <begin position="1"/>
        <end position="10"/>
    </location>
</feature>
<feature type="transmembrane region" description="Helical; Name=1" evidence="1">
    <location>
        <begin position="11"/>
        <end position="35"/>
    </location>
</feature>
<feature type="topological domain" description="Periplasmic" evidence="1">
    <location>
        <begin position="36"/>
        <end position="56"/>
    </location>
</feature>
<feature type="transmembrane region" description="Helical; Name=2" evidence="1">
    <location>
        <begin position="57"/>
        <end position="81"/>
    </location>
</feature>
<feature type="topological domain" description="Cytoplasmic" evidence="1">
    <location>
        <begin position="82"/>
        <end position="92"/>
    </location>
</feature>
<feature type="transmembrane region" description="Helical; Name=3" evidence="1">
    <location>
        <begin position="93"/>
        <end position="107"/>
    </location>
</feature>
<feature type="topological domain" description="Periplasmic" evidence="1">
    <location>
        <begin position="108"/>
        <end position="113"/>
    </location>
</feature>
<feature type="transmembrane region" description="Helical; Name=4" evidence="1">
    <location>
        <begin position="114"/>
        <end position="138"/>
    </location>
</feature>
<feature type="topological domain" description="Cytoplasmic" evidence="1">
    <location>
        <begin position="139"/>
        <end position="141"/>
    </location>
</feature>
<feature type="transmembrane region" description="Helical; Name=5" evidence="1">
    <location>
        <begin position="142"/>
        <end position="166"/>
    </location>
</feature>
<feature type="topological domain" description="Periplasmic" evidence="1">
    <location>
        <begin position="167"/>
        <end position="190"/>
    </location>
</feature>
<feature type="transmembrane region" description="Helical; Name=6" evidence="1">
    <location>
        <begin position="191"/>
        <end position="206"/>
    </location>
</feature>
<feature type="topological domain" description="Cytoplasmic" evidence="1">
    <location>
        <begin position="207"/>
        <end position="228"/>
    </location>
</feature>
<feature type="transmembrane region" description="Helical; Name=7" evidence="1">
    <location>
        <begin position="229"/>
        <end position="249"/>
    </location>
</feature>
<feature type="topological domain" description="Periplasmic" evidence="1">
    <location>
        <begin position="250"/>
        <end position="257"/>
    </location>
</feature>
<feature type="transmembrane region" description="Helical; Name=8" evidence="1">
    <location>
        <begin position="258"/>
        <end position="267"/>
    </location>
</feature>
<feature type="topological domain" description="Cytoplasmic" evidence="1">
    <location>
        <begin position="268"/>
        <end position="274"/>
    </location>
</feature>
<feature type="transmembrane region" description="Helical; Name=9" evidence="1">
    <location>
        <begin position="275"/>
        <end position="296"/>
    </location>
</feature>
<feature type="topological domain" description="Periplasmic" evidence="1">
    <location>
        <begin position="297"/>
        <end position="304"/>
    </location>
</feature>
<feature type="transmembrane region" description="Helical; Name=10" evidence="1">
    <location>
        <begin position="305"/>
        <end position="324"/>
    </location>
</feature>
<feature type="topological domain" description="Cytoplasmic" evidence="1">
    <location>
        <begin position="325"/>
        <end position="326"/>
    </location>
</feature>
<protein>
    <recommendedName>
        <fullName>Vitamin B12 import system permease protein BtuC</fullName>
    </recommendedName>
</protein>
<name>BTUC_ECOL6</name>
<gene>
    <name type="primary">btuC</name>
    <name type="ordered locus">c2107</name>
</gene>
<comment type="function">
    <text evidence="1">Part of the ABC transporter complex BtuCDF involved in vitamin B12 import. Involved in the translocation of the substrate across the membrane (By similarity).</text>
</comment>
<comment type="subunit">
    <text evidence="1">The complex is composed of two ATP-binding proteins (BtuD), two transmembrane proteins (BtuC) and a solute-binding protein (BtuF).</text>
</comment>
<comment type="subcellular location">
    <subcellularLocation>
        <location evidence="1">Cell inner membrane</location>
        <topology evidence="1">Multi-pass membrane protein</topology>
    </subcellularLocation>
</comment>
<comment type="similarity">
    <text evidence="2">Belongs to the binding-protein-dependent transport system permease family. FecCD subfamily.</text>
</comment>
<organism>
    <name type="scientific">Escherichia coli O6:H1 (strain CFT073 / ATCC 700928 / UPEC)</name>
    <dbReference type="NCBI Taxonomy" id="199310"/>
    <lineage>
        <taxon>Bacteria</taxon>
        <taxon>Pseudomonadati</taxon>
        <taxon>Pseudomonadota</taxon>
        <taxon>Gammaproteobacteria</taxon>
        <taxon>Enterobacterales</taxon>
        <taxon>Enterobacteriaceae</taxon>
        <taxon>Escherichia</taxon>
    </lineage>
</organism>